<proteinExistence type="inferred from homology"/>
<protein>
    <recommendedName>
        <fullName evidence="2">Small ribosomal subunit protein uS3c</fullName>
    </recommendedName>
    <alternativeName>
        <fullName>30S ribosomal protein S3, chloroplastic</fullName>
    </alternativeName>
</protein>
<gene>
    <name type="primary">rps3</name>
</gene>
<organism>
    <name type="scientific">Solanum lycopersicum</name>
    <name type="common">Tomato</name>
    <name type="synonym">Lycopersicon esculentum</name>
    <dbReference type="NCBI Taxonomy" id="4081"/>
    <lineage>
        <taxon>Eukaryota</taxon>
        <taxon>Viridiplantae</taxon>
        <taxon>Streptophyta</taxon>
        <taxon>Embryophyta</taxon>
        <taxon>Tracheophyta</taxon>
        <taxon>Spermatophyta</taxon>
        <taxon>Magnoliopsida</taxon>
        <taxon>eudicotyledons</taxon>
        <taxon>Gunneridae</taxon>
        <taxon>Pentapetalae</taxon>
        <taxon>asterids</taxon>
        <taxon>lamiids</taxon>
        <taxon>Solanales</taxon>
        <taxon>Solanaceae</taxon>
        <taxon>Solanoideae</taxon>
        <taxon>Solaneae</taxon>
        <taxon>Solanum</taxon>
        <taxon>Solanum subgen. Lycopersicon</taxon>
    </lineage>
</organism>
<geneLocation type="chloroplast"/>
<sequence length="218" mass="25150">MGQKINPLGFRLGTTQSHHSLWFSQPKNYSEGLQEDKKIRDCIKNYVQKNMRTSSGIEGIARIEIQKRIDLIQVIIFMGFPKLLIESRPRGIEELQMTLQKEFNCVNRKLNIAVTRIAKPYGNPNILAEFIAGQLKNRVSFRKAMKKAIELTEQADTKGIQIQIAGRIDGKEIARVEWIREGRVPLQTIRAKIDYCSYTVRTIYGILGIKIWIFLDEE</sequence>
<accession>Q2MI62</accession>
<name>RR3_SOLLC</name>
<dbReference type="EMBL" id="DQ347959">
    <property type="protein sequence ID" value="ABC56338.1"/>
    <property type="molecule type" value="Genomic_DNA"/>
</dbReference>
<dbReference type="EMBL" id="AM087200">
    <property type="protein sequence ID" value="CAJ32432.1"/>
    <property type="molecule type" value="Genomic_DNA"/>
</dbReference>
<dbReference type="RefSeq" id="AP_004966.1">
    <property type="nucleotide sequence ID" value="AC_000188.1"/>
</dbReference>
<dbReference type="RefSeq" id="XP_004228579.2">
    <property type="nucleotide sequence ID" value="XM_004228531.3"/>
</dbReference>
<dbReference type="RefSeq" id="YP_008563127.1">
    <property type="nucleotide sequence ID" value="NC_007898.3"/>
</dbReference>
<dbReference type="SMR" id="Q2MI62"/>
<dbReference type="FunCoup" id="Q2MI62">
    <property type="interactions" value="308"/>
</dbReference>
<dbReference type="STRING" id="4081.Q2MI62"/>
<dbReference type="PaxDb" id="4081-Solyc01g007610.2.1"/>
<dbReference type="GeneID" id="3950406"/>
<dbReference type="KEGG" id="sly:3950406"/>
<dbReference type="eggNOG" id="KOG1711">
    <property type="taxonomic scope" value="Eukaryota"/>
</dbReference>
<dbReference type="InParanoid" id="Q2MI62"/>
<dbReference type="OrthoDB" id="1842609at2759"/>
<dbReference type="Proteomes" id="UP000004994">
    <property type="component" value="Chloroplast"/>
</dbReference>
<dbReference type="GO" id="GO:0009507">
    <property type="term" value="C:chloroplast"/>
    <property type="evidence" value="ECO:0007669"/>
    <property type="project" value="UniProtKB-SubCell"/>
</dbReference>
<dbReference type="GO" id="GO:0022627">
    <property type="term" value="C:cytosolic small ribosomal subunit"/>
    <property type="evidence" value="ECO:0000318"/>
    <property type="project" value="GO_Central"/>
</dbReference>
<dbReference type="GO" id="GO:0019843">
    <property type="term" value="F:rRNA binding"/>
    <property type="evidence" value="ECO:0007669"/>
    <property type="project" value="UniProtKB-UniRule"/>
</dbReference>
<dbReference type="GO" id="GO:0003735">
    <property type="term" value="F:structural constituent of ribosome"/>
    <property type="evidence" value="ECO:0000318"/>
    <property type="project" value="GO_Central"/>
</dbReference>
<dbReference type="GO" id="GO:0006412">
    <property type="term" value="P:translation"/>
    <property type="evidence" value="ECO:0007669"/>
    <property type="project" value="UniProtKB-UniRule"/>
</dbReference>
<dbReference type="CDD" id="cd02412">
    <property type="entry name" value="KH-II_30S_S3"/>
    <property type="match status" value="1"/>
</dbReference>
<dbReference type="FunFam" id="3.30.1140.32:FF:000003">
    <property type="entry name" value="30S ribosomal protein S3, chloroplastic"/>
    <property type="match status" value="1"/>
</dbReference>
<dbReference type="FunFam" id="3.30.300.20:FF:000008">
    <property type="entry name" value="30S ribosomal protein S3, chloroplastic"/>
    <property type="match status" value="1"/>
</dbReference>
<dbReference type="Gene3D" id="3.30.300.20">
    <property type="match status" value="1"/>
</dbReference>
<dbReference type="Gene3D" id="3.30.1140.32">
    <property type="entry name" value="Ribosomal protein S3, C-terminal domain"/>
    <property type="match status" value="1"/>
</dbReference>
<dbReference type="HAMAP" id="MF_01309_B">
    <property type="entry name" value="Ribosomal_uS3_B"/>
    <property type="match status" value="1"/>
</dbReference>
<dbReference type="InterPro" id="IPR015946">
    <property type="entry name" value="KH_dom-like_a/b"/>
</dbReference>
<dbReference type="InterPro" id="IPR004044">
    <property type="entry name" value="KH_dom_type_2"/>
</dbReference>
<dbReference type="InterPro" id="IPR009019">
    <property type="entry name" value="KH_sf_prok-type"/>
</dbReference>
<dbReference type="InterPro" id="IPR036419">
    <property type="entry name" value="Ribosomal_S3_C_sf"/>
</dbReference>
<dbReference type="InterPro" id="IPR005704">
    <property type="entry name" value="Ribosomal_uS3_bac-typ"/>
</dbReference>
<dbReference type="InterPro" id="IPR001351">
    <property type="entry name" value="Ribosomal_uS3_C"/>
</dbReference>
<dbReference type="InterPro" id="IPR018280">
    <property type="entry name" value="Ribosomal_uS3_CS"/>
</dbReference>
<dbReference type="NCBIfam" id="TIGR01009">
    <property type="entry name" value="rpsC_bact"/>
    <property type="match status" value="1"/>
</dbReference>
<dbReference type="PANTHER" id="PTHR11760">
    <property type="entry name" value="30S/40S RIBOSOMAL PROTEIN S3"/>
    <property type="match status" value="1"/>
</dbReference>
<dbReference type="PANTHER" id="PTHR11760:SF19">
    <property type="entry name" value="SMALL RIBOSOMAL SUBUNIT PROTEIN US3C"/>
    <property type="match status" value="1"/>
</dbReference>
<dbReference type="Pfam" id="PF00189">
    <property type="entry name" value="Ribosomal_S3_C"/>
    <property type="match status" value="1"/>
</dbReference>
<dbReference type="SUPFAM" id="SSF54814">
    <property type="entry name" value="Prokaryotic type KH domain (KH-domain type II)"/>
    <property type="match status" value="1"/>
</dbReference>
<dbReference type="SUPFAM" id="SSF54821">
    <property type="entry name" value="Ribosomal protein S3 C-terminal domain"/>
    <property type="match status" value="1"/>
</dbReference>
<dbReference type="PROSITE" id="PS50823">
    <property type="entry name" value="KH_TYPE_2"/>
    <property type="match status" value="1"/>
</dbReference>
<dbReference type="PROSITE" id="PS00548">
    <property type="entry name" value="RIBOSOMAL_S3"/>
    <property type="match status" value="1"/>
</dbReference>
<feature type="chain" id="PRO_0000230753" description="Small ribosomal subunit protein uS3c">
    <location>
        <begin position="1"/>
        <end position="218"/>
    </location>
</feature>
<feature type="domain" description="KH type-2">
    <location>
        <begin position="47"/>
        <end position="118"/>
    </location>
</feature>
<keyword id="KW-0150">Chloroplast</keyword>
<keyword id="KW-0934">Plastid</keyword>
<keyword id="KW-1185">Reference proteome</keyword>
<keyword id="KW-0687">Ribonucleoprotein</keyword>
<keyword id="KW-0689">Ribosomal protein</keyword>
<keyword id="KW-0694">RNA-binding</keyword>
<keyword id="KW-0699">rRNA-binding</keyword>
<comment type="subunit">
    <text evidence="1">Part of the 30S ribosomal subunit.</text>
</comment>
<comment type="subcellular location">
    <subcellularLocation>
        <location>Plastid</location>
        <location>Chloroplast</location>
    </subcellularLocation>
</comment>
<comment type="similarity">
    <text evidence="2">Belongs to the universal ribosomal protein uS3 family.</text>
</comment>
<evidence type="ECO:0000250" key="1"/>
<evidence type="ECO:0000305" key="2"/>
<reference key="1">
    <citation type="journal article" date="2006" name="Theor. Appl. Genet.">
        <title>Complete chloroplast genome sequences of Solanum bulbocastanum, Solanum lycopersicum and comparative analyses with other Solanaceae genomes.</title>
        <authorList>
            <person name="Daniell H."/>
            <person name="Lee S.-B."/>
            <person name="Grevich J."/>
            <person name="Saski C."/>
            <person name="Quesada-Vargas T."/>
            <person name="Guda C."/>
            <person name="Tomkins J."/>
            <person name="Jansen R.K."/>
        </authorList>
    </citation>
    <scope>NUCLEOTIDE SEQUENCE [LARGE SCALE GENOMIC DNA]</scope>
    <source>
        <strain>cv. LA3023</strain>
    </source>
</reference>
<reference key="2">
    <citation type="journal article" date="2006" name="J. Mol. Evol.">
        <title>Sequence of the tomato chloroplast DNA and evolutionary comparison of solanaceous plastid genomes.</title>
        <authorList>
            <person name="Kahlau S."/>
            <person name="Aspinall S."/>
            <person name="Gray J.C."/>
            <person name="Bock R."/>
        </authorList>
    </citation>
    <scope>NUCLEOTIDE SEQUENCE [LARGE SCALE GENOMIC DNA]</scope>
    <source>
        <strain>cv. IPA-6</strain>
    </source>
</reference>